<keyword id="KW-0067">ATP-binding</keyword>
<keyword id="KW-0238">DNA-binding</keyword>
<keyword id="KW-0547">Nucleotide-binding</keyword>
<keyword id="KW-0597">Phosphoprotein</keyword>
<keyword id="KW-1185">Reference proteome</keyword>
<keyword id="KW-0804">Transcription</keyword>
<keyword id="KW-0805">Transcription regulation</keyword>
<comment type="function">
    <text evidence="1">Required for the expression of anaerobic nitric oxide (NO) reductase, acts as a transcriptional activator for at least the norVW operon. Activation also requires sigma-54.</text>
</comment>
<comment type="pathway">
    <text evidence="1">Nitrogen metabolism; nitric oxide reduction.</text>
</comment>
<reference key="1">
    <citation type="journal article" date="2009" name="J. Bacteriol.">
        <title>Complete genome sequence and comparative genome analysis of enteropathogenic Escherichia coli O127:H6 strain E2348/69.</title>
        <authorList>
            <person name="Iguchi A."/>
            <person name="Thomson N.R."/>
            <person name="Ogura Y."/>
            <person name="Saunders D."/>
            <person name="Ooka T."/>
            <person name="Henderson I.R."/>
            <person name="Harris D."/>
            <person name="Asadulghani M."/>
            <person name="Kurokawa K."/>
            <person name="Dean P."/>
            <person name="Kenny B."/>
            <person name="Quail M.A."/>
            <person name="Thurston S."/>
            <person name="Dougan G."/>
            <person name="Hayashi T."/>
            <person name="Parkhill J."/>
            <person name="Frankel G."/>
        </authorList>
    </citation>
    <scope>NUCLEOTIDE SEQUENCE [LARGE SCALE GENOMIC DNA]</scope>
    <source>
        <strain>E2348/69 / EPEC</strain>
    </source>
</reference>
<name>NORR_ECO27</name>
<proteinExistence type="inferred from homology"/>
<feature type="chain" id="PRO_1000165587" description="Anaerobic nitric oxide reductase transcription regulator NorR">
    <location>
        <begin position="1"/>
        <end position="504"/>
    </location>
</feature>
<feature type="domain" description="Sigma-54 factor interaction" evidence="1">
    <location>
        <begin position="187"/>
        <end position="416"/>
    </location>
</feature>
<feature type="DNA-binding region" description="H-T-H motif" evidence="1">
    <location>
        <begin position="479"/>
        <end position="498"/>
    </location>
</feature>
<feature type="binding site" evidence="1">
    <location>
        <begin position="215"/>
        <end position="222"/>
    </location>
    <ligand>
        <name>ATP</name>
        <dbReference type="ChEBI" id="CHEBI:30616"/>
    </ligand>
</feature>
<feature type="binding site" evidence="1">
    <location>
        <begin position="278"/>
        <end position="287"/>
    </location>
    <ligand>
        <name>ATP</name>
        <dbReference type="ChEBI" id="CHEBI:30616"/>
    </ligand>
</feature>
<feature type="modified residue" description="4-aspartylphosphate" evidence="1">
    <location>
        <position position="57"/>
    </location>
</feature>
<sequence length="504" mass="55198">MSFSVDVLANIAIELQRGIGHQDRFQRLITTLRQVLECDASALLRYDSRQFIPLAIDGLAKDVLGRRFALEGHPRLEAIARAGDVVRFPADSELPDPYDGLIPGQESLKVHACVGLPLFAGQNLIGALTLDGMQPDQFDVFSDEELRLIAALAAGALSNALLIEQLESQNMLPGDAAPFEAVKQTQMIGLSPGMTQLKKEIEIVAASDLNVLISGETGTGKELVAKAIHEASPRAVNPLVYLNCAALPESVAESELFGHVKGAFTGAISNRSGKFEMADNGTLFLDEIGELSLALQAKLLRVLQYGDIQRVGDDRSLRVDVRVLAATNRDLREEVLAGRFRADLFHRLSVFPLSVPPLRERGDDVILLAGYFCEQCRLRLGLSRVVLSAGARNLLQHYNFPGNVRELEHAIHRAVVLARATRSGDEVILEAQHFAFPEVTLPPPEVAAVPVVKQNLREATEAFQRETIRQALAQNHHNWAACARMLETDVANLHRLAKRLGLKD</sequence>
<dbReference type="EMBL" id="FM180568">
    <property type="protein sequence ID" value="CAS10514.1"/>
    <property type="molecule type" value="Genomic_DNA"/>
</dbReference>
<dbReference type="RefSeq" id="WP_000010726.1">
    <property type="nucleotide sequence ID" value="NC_011601.1"/>
</dbReference>
<dbReference type="SMR" id="B7UHC1"/>
<dbReference type="KEGG" id="ecg:E2348C_2966"/>
<dbReference type="HOGENOM" id="CLU_000445_125_0_6"/>
<dbReference type="UniPathway" id="UPA00638"/>
<dbReference type="Proteomes" id="UP000008205">
    <property type="component" value="Chromosome"/>
</dbReference>
<dbReference type="GO" id="GO:0005524">
    <property type="term" value="F:ATP binding"/>
    <property type="evidence" value="ECO:0007669"/>
    <property type="project" value="UniProtKB-UniRule"/>
</dbReference>
<dbReference type="GO" id="GO:0016887">
    <property type="term" value="F:ATP hydrolysis activity"/>
    <property type="evidence" value="ECO:0007669"/>
    <property type="project" value="InterPro"/>
</dbReference>
<dbReference type="GO" id="GO:0003677">
    <property type="term" value="F:DNA binding"/>
    <property type="evidence" value="ECO:0007669"/>
    <property type="project" value="UniProtKB-KW"/>
</dbReference>
<dbReference type="GO" id="GO:0003700">
    <property type="term" value="F:DNA-binding transcription factor activity"/>
    <property type="evidence" value="ECO:0007669"/>
    <property type="project" value="UniProtKB-UniRule"/>
</dbReference>
<dbReference type="GO" id="GO:0000160">
    <property type="term" value="P:phosphorelay signal transduction system"/>
    <property type="evidence" value="ECO:0007669"/>
    <property type="project" value="UniProtKB-UniRule"/>
</dbReference>
<dbReference type="CDD" id="cd00009">
    <property type="entry name" value="AAA"/>
    <property type="match status" value="1"/>
</dbReference>
<dbReference type="FunFam" id="1.10.10.60:FF:000188">
    <property type="entry name" value="Anaerobic nitric oxide reductase transcription regulator NorR"/>
    <property type="match status" value="1"/>
</dbReference>
<dbReference type="FunFam" id="1.10.8.60:FF:000045">
    <property type="entry name" value="Anaerobic nitric oxide reductase transcription regulator NorR"/>
    <property type="match status" value="1"/>
</dbReference>
<dbReference type="FunFam" id="3.30.450.40:FF:000021">
    <property type="entry name" value="Anaerobic nitric oxide reductase transcription regulator NorR"/>
    <property type="match status" value="1"/>
</dbReference>
<dbReference type="FunFam" id="3.40.50.300:FF:000006">
    <property type="entry name" value="DNA-binding transcriptional regulator NtrC"/>
    <property type="match status" value="1"/>
</dbReference>
<dbReference type="Gene3D" id="1.10.8.60">
    <property type="match status" value="1"/>
</dbReference>
<dbReference type="Gene3D" id="3.30.450.40">
    <property type="match status" value="1"/>
</dbReference>
<dbReference type="Gene3D" id="1.10.10.60">
    <property type="entry name" value="Homeodomain-like"/>
    <property type="match status" value="1"/>
</dbReference>
<dbReference type="Gene3D" id="3.40.50.300">
    <property type="entry name" value="P-loop containing nucleotide triphosphate hydrolases"/>
    <property type="match status" value="1"/>
</dbReference>
<dbReference type="HAMAP" id="MF_01314">
    <property type="entry name" value="NorR"/>
    <property type="match status" value="1"/>
</dbReference>
<dbReference type="InterPro" id="IPR003593">
    <property type="entry name" value="AAA+_ATPase"/>
</dbReference>
<dbReference type="InterPro" id="IPR003018">
    <property type="entry name" value="GAF"/>
</dbReference>
<dbReference type="InterPro" id="IPR029016">
    <property type="entry name" value="GAF-like_dom_sf"/>
</dbReference>
<dbReference type="InterPro" id="IPR009057">
    <property type="entry name" value="Homeodomain-like_sf"/>
</dbReference>
<dbReference type="InterPro" id="IPR023944">
    <property type="entry name" value="NorR"/>
</dbReference>
<dbReference type="InterPro" id="IPR027417">
    <property type="entry name" value="P-loop_NTPase"/>
</dbReference>
<dbReference type="InterPro" id="IPR002078">
    <property type="entry name" value="Sigma_54_int"/>
</dbReference>
<dbReference type="InterPro" id="IPR025662">
    <property type="entry name" value="Sigma_54_int_dom_ATP-bd_1"/>
</dbReference>
<dbReference type="InterPro" id="IPR025943">
    <property type="entry name" value="Sigma_54_int_dom_ATP-bd_2"/>
</dbReference>
<dbReference type="InterPro" id="IPR025944">
    <property type="entry name" value="Sigma_54_int_dom_CS"/>
</dbReference>
<dbReference type="NCBIfam" id="NF003451">
    <property type="entry name" value="PRK05022.1"/>
    <property type="match status" value="1"/>
</dbReference>
<dbReference type="PANTHER" id="PTHR32071:SF35">
    <property type="entry name" value="ANAEROBIC NITRIC OXIDE REDUCTASE TRANSCRIPTION REGULATOR NORR"/>
    <property type="match status" value="1"/>
</dbReference>
<dbReference type="PANTHER" id="PTHR32071">
    <property type="entry name" value="TRANSCRIPTIONAL REGULATORY PROTEIN"/>
    <property type="match status" value="1"/>
</dbReference>
<dbReference type="Pfam" id="PF01590">
    <property type="entry name" value="GAF"/>
    <property type="match status" value="1"/>
</dbReference>
<dbReference type="Pfam" id="PF00158">
    <property type="entry name" value="Sigma54_activat"/>
    <property type="match status" value="1"/>
</dbReference>
<dbReference type="SMART" id="SM00382">
    <property type="entry name" value="AAA"/>
    <property type="match status" value="1"/>
</dbReference>
<dbReference type="SMART" id="SM00065">
    <property type="entry name" value="GAF"/>
    <property type="match status" value="1"/>
</dbReference>
<dbReference type="SUPFAM" id="SSF55781">
    <property type="entry name" value="GAF domain-like"/>
    <property type="match status" value="1"/>
</dbReference>
<dbReference type="SUPFAM" id="SSF46689">
    <property type="entry name" value="Homeodomain-like"/>
    <property type="match status" value="1"/>
</dbReference>
<dbReference type="SUPFAM" id="SSF52540">
    <property type="entry name" value="P-loop containing nucleoside triphosphate hydrolases"/>
    <property type="match status" value="1"/>
</dbReference>
<dbReference type="PROSITE" id="PS00675">
    <property type="entry name" value="SIGMA54_INTERACT_1"/>
    <property type="match status" value="1"/>
</dbReference>
<dbReference type="PROSITE" id="PS00676">
    <property type="entry name" value="SIGMA54_INTERACT_2"/>
    <property type="match status" value="1"/>
</dbReference>
<dbReference type="PROSITE" id="PS00688">
    <property type="entry name" value="SIGMA54_INTERACT_3"/>
    <property type="match status" value="1"/>
</dbReference>
<dbReference type="PROSITE" id="PS50045">
    <property type="entry name" value="SIGMA54_INTERACT_4"/>
    <property type="match status" value="1"/>
</dbReference>
<protein>
    <recommendedName>
        <fullName evidence="1">Anaerobic nitric oxide reductase transcription regulator NorR</fullName>
    </recommendedName>
</protein>
<gene>
    <name evidence="1" type="primary">norR</name>
    <name type="ordered locus">E2348C_2966</name>
</gene>
<organism>
    <name type="scientific">Escherichia coli O127:H6 (strain E2348/69 / EPEC)</name>
    <dbReference type="NCBI Taxonomy" id="574521"/>
    <lineage>
        <taxon>Bacteria</taxon>
        <taxon>Pseudomonadati</taxon>
        <taxon>Pseudomonadota</taxon>
        <taxon>Gammaproteobacteria</taxon>
        <taxon>Enterobacterales</taxon>
        <taxon>Enterobacteriaceae</taxon>
        <taxon>Escherichia</taxon>
    </lineage>
</organism>
<evidence type="ECO:0000255" key="1">
    <source>
        <dbReference type="HAMAP-Rule" id="MF_01314"/>
    </source>
</evidence>
<accession>B7UHC1</accession>